<reference key="1">
    <citation type="journal article" date="2009" name="BMC Genomics">
        <title>Metabolic analysis of the soil microbe Dechloromonas aromatica str. RCB: indications of a surprisingly complex life-style and cryptic anaerobic pathways for aromatic degradation.</title>
        <authorList>
            <person name="Salinero K.K."/>
            <person name="Keller K."/>
            <person name="Feil W.S."/>
            <person name="Feil H."/>
            <person name="Trong S."/>
            <person name="Di Bartolo G."/>
            <person name="Lapidus A."/>
        </authorList>
    </citation>
    <scope>NUCLEOTIDE SEQUENCE [LARGE SCALE GENOMIC DNA]</scope>
    <source>
        <strain>RCB</strain>
    </source>
</reference>
<organism>
    <name type="scientific">Dechloromonas aromatica (strain RCB)</name>
    <dbReference type="NCBI Taxonomy" id="159087"/>
    <lineage>
        <taxon>Bacteria</taxon>
        <taxon>Pseudomonadati</taxon>
        <taxon>Pseudomonadota</taxon>
        <taxon>Betaproteobacteria</taxon>
        <taxon>Rhodocyclales</taxon>
        <taxon>Azonexaceae</taxon>
        <taxon>Dechloromonas</taxon>
    </lineage>
</organism>
<sequence>MAKLRQCAIYGKGGIGKSTTTQNLVAALAESGKKVMIVGCDPKADSTRLILHSKAQTTVMHLAAEAGSVEDLELEDVLSVGFGGIKCVESGGPEPGVGCAGRGVITAINFLEEEGAYDEDLDFVFYDVLGDVVCGGFAMPIRENKAQEIYIVCSGEMMAMYAANNIAKGIVKYANSGGVRLAGLICNSRNTDREDELIMALAGRLGTTMIHFVPRDNAVQHAEIRRMTMVEYDPKHKQADEYRQLANKIVNNTNFVIPTPIEMEELEELLMEFGIMEAEDESIVGQTAAELAAAAA</sequence>
<name>NIFH_DECAR</name>
<proteinExistence type="inferred from homology"/>
<keyword id="KW-0004">4Fe-4S</keyword>
<keyword id="KW-0013">ADP-ribosylation</keyword>
<keyword id="KW-0067">ATP-binding</keyword>
<keyword id="KW-0408">Iron</keyword>
<keyword id="KW-0411">Iron-sulfur</keyword>
<keyword id="KW-0479">Metal-binding</keyword>
<keyword id="KW-0535">Nitrogen fixation</keyword>
<keyword id="KW-0547">Nucleotide-binding</keyword>
<keyword id="KW-0560">Oxidoreductase</keyword>
<protein>
    <recommendedName>
        <fullName evidence="1">Nitrogenase iron protein</fullName>
        <ecNumber evidence="1">1.18.6.1</ecNumber>
    </recommendedName>
    <alternativeName>
        <fullName evidence="1">Nitrogenase Fe protein</fullName>
    </alternativeName>
    <alternativeName>
        <fullName evidence="1">Nitrogenase component II</fullName>
    </alternativeName>
    <alternativeName>
        <fullName evidence="1">Nitrogenase reductase</fullName>
    </alternativeName>
</protein>
<dbReference type="EC" id="1.18.6.1" evidence="1"/>
<dbReference type="EMBL" id="CP000089">
    <property type="protein sequence ID" value="AAZ46164.1"/>
    <property type="molecule type" value="Genomic_DNA"/>
</dbReference>
<dbReference type="SMR" id="Q47G67"/>
<dbReference type="STRING" id="159087.Daro_1415"/>
<dbReference type="KEGG" id="dar:Daro_1415"/>
<dbReference type="eggNOG" id="COG1348">
    <property type="taxonomic scope" value="Bacteria"/>
</dbReference>
<dbReference type="HOGENOM" id="CLU_059373_0_0_4"/>
<dbReference type="OrthoDB" id="9815116at2"/>
<dbReference type="GO" id="GO:0051539">
    <property type="term" value="F:4 iron, 4 sulfur cluster binding"/>
    <property type="evidence" value="ECO:0007669"/>
    <property type="project" value="UniProtKB-KW"/>
</dbReference>
<dbReference type="GO" id="GO:0005524">
    <property type="term" value="F:ATP binding"/>
    <property type="evidence" value="ECO:0007669"/>
    <property type="project" value="UniProtKB-UniRule"/>
</dbReference>
<dbReference type="GO" id="GO:0046872">
    <property type="term" value="F:metal ion binding"/>
    <property type="evidence" value="ECO:0007669"/>
    <property type="project" value="UniProtKB-KW"/>
</dbReference>
<dbReference type="GO" id="GO:0016163">
    <property type="term" value="F:nitrogenase activity"/>
    <property type="evidence" value="ECO:0007669"/>
    <property type="project" value="UniProtKB-UniRule"/>
</dbReference>
<dbReference type="GO" id="GO:0009399">
    <property type="term" value="P:nitrogen fixation"/>
    <property type="evidence" value="ECO:0007669"/>
    <property type="project" value="UniProtKB-UniRule"/>
</dbReference>
<dbReference type="CDD" id="cd02040">
    <property type="entry name" value="NifH"/>
    <property type="match status" value="1"/>
</dbReference>
<dbReference type="FunFam" id="3.40.50.300:FF:001379">
    <property type="entry name" value="Nitrogenase iron protein 1"/>
    <property type="match status" value="1"/>
</dbReference>
<dbReference type="Gene3D" id="3.40.50.300">
    <property type="entry name" value="P-loop containing nucleotide triphosphate hydrolases"/>
    <property type="match status" value="1"/>
</dbReference>
<dbReference type="HAMAP" id="MF_00533">
    <property type="entry name" value="NifH"/>
    <property type="match status" value="1"/>
</dbReference>
<dbReference type="InterPro" id="IPR030655">
    <property type="entry name" value="NifH/chlL_CS"/>
</dbReference>
<dbReference type="InterPro" id="IPR000392">
    <property type="entry name" value="NifH/frxC"/>
</dbReference>
<dbReference type="InterPro" id="IPR005977">
    <property type="entry name" value="Nitrogenase_Fe_NifH"/>
</dbReference>
<dbReference type="InterPro" id="IPR027417">
    <property type="entry name" value="P-loop_NTPase"/>
</dbReference>
<dbReference type="NCBIfam" id="TIGR01287">
    <property type="entry name" value="nifH"/>
    <property type="match status" value="1"/>
</dbReference>
<dbReference type="PANTHER" id="PTHR42864">
    <property type="entry name" value="LIGHT-INDEPENDENT PROTOCHLOROPHYLLIDE REDUCTASE IRON-SULFUR ATP-BINDING PROTEIN"/>
    <property type="match status" value="1"/>
</dbReference>
<dbReference type="PANTHER" id="PTHR42864:SF2">
    <property type="entry name" value="LIGHT-INDEPENDENT PROTOCHLOROPHYLLIDE REDUCTASE IRON-SULFUR ATP-BINDING PROTEIN"/>
    <property type="match status" value="1"/>
</dbReference>
<dbReference type="Pfam" id="PF00142">
    <property type="entry name" value="Fer4_NifH"/>
    <property type="match status" value="1"/>
</dbReference>
<dbReference type="PIRSF" id="PIRSF000363">
    <property type="entry name" value="Nitrogenase_iron"/>
    <property type="match status" value="1"/>
</dbReference>
<dbReference type="PRINTS" id="PR00091">
    <property type="entry name" value="NITROGNASEII"/>
</dbReference>
<dbReference type="SUPFAM" id="SSF52540">
    <property type="entry name" value="P-loop containing nucleoside triphosphate hydrolases"/>
    <property type="match status" value="1"/>
</dbReference>
<dbReference type="PROSITE" id="PS00746">
    <property type="entry name" value="NIFH_FRXC_1"/>
    <property type="match status" value="1"/>
</dbReference>
<dbReference type="PROSITE" id="PS00692">
    <property type="entry name" value="NIFH_FRXC_2"/>
    <property type="match status" value="1"/>
</dbReference>
<dbReference type="PROSITE" id="PS51026">
    <property type="entry name" value="NIFH_FRXC_3"/>
    <property type="match status" value="1"/>
</dbReference>
<comment type="function">
    <text evidence="1">The key enzymatic reactions in nitrogen fixation are catalyzed by the nitrogenase complex, which has 2 components: the iron protein and the molybdenum-iron protein.</text>
</comment>
<comment type="catalytic activity">
    <reaction evidence="1">
        <text>N2 + 8 reduced [2Fe-2S]-[ferredoxin] + 16 ATP + 16 H2O = H2 + 8 oxidized [2Fe-2S]-[ferredoxin] + 2 NH4(+) + 16 ADP + 16 phosphate + 6 H(+)</text>
        <dbReference type="Rhea" id="RHEA:21448"/>
        <dbReference type="Rhea" id="RHEA-COMP:10000"/>
        <dbReference type="Rhea" id="RHEA-COMP:10001"/>
        <dbReference type="ChEBI" id="CHEBI:15377"/>
        <dbReference type="ChEBI" id="CHEBI:15378"/>
        <dbReference type="ChEBI" id="CHEBI:17997"/>
        <dbReference type="ChEBI" id="CHEBI:18276"/>
        <dbReference type="ChEBI" id="CHEBI:28938"/>
        <dbReference type="ChEBI" id="CHEBI:30616"/>
        <dbReference type="ChEBI" id="CHEBI:33737"/>
        <dbReference type="ChEBI" id="CHEBI:33738"/>
        <dbReference type="ChEBI" id="CHEBI:43474"/>
        <dbReference type="ChEBI" id="CHEBI:456216"/>
        <dbReference type="EC" id="1.18.6.1"/>
    </reaction>
</comment>
<comment type="cofactor">
    <cofactor evidence="1">
        <name>[4Fe-4S] cluster</name>
        <dbReference type="ChEBI" id="CHEBI:49883"/>
    </cofactor>
    <text evidence="1">Binds 1 [4Fe-4S] cluster per dimer.</text>
</comment>
<comment type="subunit">
    <text evidence="1">Homodimer.</text>
</comment>
<comment type="PTM">
    <text evidence="1">The reversible ADP-ribosylation of Arg-102 inactivates the nitrogenase reductase and regulates nitrogenase activity.</text>
</comment>
<comment type="similarity">
    <text evidence="1">Belongs to the NifH/BchL/ChlL family.</text>
</comment>
<evidence type="ECO:0000255" key="1">
    <source>
        <dbReference type="HAMAP-Rule" id="MF_00533"/>
    </source>
</evidence>
<gene>
    <name evidence="1" type="primary">nifH</name>
    <name type="ordered locus">Daro_1415</name>
</gene>
<accession>Q47G67</accession>
<feature type="chain" id="PRO_1000211861" description="Nitrogenase iron protein">
    <location>
        <begin position="1"/>
        <end position="296"/>
    </location>
</feature>
<feature type="binding site" evidence="1">
    <location>
        <begin position="11"/>
        <end position="18"/>
    </location>
    <ligand>
        <name>ATP</name>
        <dbReference type="ChEBI" id="CHEBI:30616"/>
    </ligand>
</feature>
<feature type="binding site" evidence="1">
    <location>
        <position position="99"/>
    </location>
    <ligand>
        <name>[4Fe-4S] cluster</name>
        <dbReference type="ChEBI" id="CHEBI:49883"/>
        <note>ligand shared between dimeric partners</note>
    </ligand>
</feature>
<feature type="binding site" evidence="1">
    <location>
        <position position="134"/>
    </location>
    <ligand>
        <name>[4Fe-4S] cluster</name>
        <dbReference type="ChEBI" id="CHEBI:49883"/>
        <note>ligand shared between dimeric partners</note>
    </ligand>
</feature>
<feature type="modified residue" description="ADP-ribosylarginine; by dinitrogenase reductase ADP-ribosyltransferase" evidence="1">
    <location>
        <position position="102"/>
    </location>
</feature>